<organism>
    <name type="scientific">Helicobacter pylori (strain Shi470)</name>
    <dbReference type="NCBI Taxonomy" id="512562"/>
    <lineage>
        <taxon>Bacteria</taxon>
        <taxon>Pseudomonadati</taxon>
        <taxon>Campylobacterota</taxon>
        <taxon>Epsilonproteobacteria</taxon>
        <taxon>Campylobacterales</taxon>
        <taxon>Helicobacteraceae</taxon>
        <taxon>Helicobacter</taxon>
    </lineage>
</organism>
<dbReference type="EC" id="2.7.7.3" evidence="1"/>
<dbReference type="EMBL" id="CP001072">
    <property type="protein sequence ID" value="ACD48902.1"/>
    <property type="molecule type" value="Genomic_DNA"/>
</dbReference>
<dbReference type="RefSeq" id="WP_001169286.1">
    <property type="nucleotide sequence ID" value="NC_010698.2"/>
</dbReference>
<dbReference type="SMR" id="B2UVM0"/>
<dbReference type="KEGG" id="hps:HPSH_07555"/>
<dbReference type="HOGENOM" id="CLU_100149_0_1_7"/>
<dbReference type="UniPathway" id="UPA00241">
    <property type="reaction ID" value="UER00355"/>
</dbReference>
<dbReference type="GO" id="GO:0005737">
    <property type="term" value="C:cytoplasm"/>
    <property type="evidence" value="ECO:0007669"/>
    <property type="project" value="UniProtKB-SubCell"/>
</dbReference>
<dbReference type="GO" id="GO:0005524">
    <property type="term" value="F:ATP binding"/>
    <property type="evidence" value="ECO:0007669"/>
    <property type="project" value="UniProtKB-KW"/>
</dbReference>
<dbReference type="GO" id="GO:0004595">
    <property type="term" value="F:pantetheine-phosphate adenylyltransferase activity"/>
    <property type="evidence" value="ECO:0007669"/>
    <property type="project" value="UniProtKB-UniRule"/>
</dbReference>
<dbReference type="GO" id="GO:0015937">
    <property type="term" value="P:coenzyme A biosynthetic process"/>
    <property type="evidence" value="ECO:0007669"/>
    <property type="project" value="UniProtKB-UniRule"/>
</dbReference>
<dbReference type="CDD" id="cd02163">
    <property type="entry name" value="PPAT"/>
    <property type="match status" value="1"/>
</dbReference>
<dbReference type="Gene3D" id="3.40.50.620">
    <property type="entry name" value="HUPs"/>
    <property type="match status" value="1"/>
</dbReference>
<dbReference type="HAMAP" id="MF_00151">
    <property type="entry name" value="PPAT_bact"/>
    <property type="match status" value="1"/>
</dbReference>
<dbReference type="InterPro" id="IPR004821">
    <property type="entry name" value="Cyt_trans-like"/>
</dbReference>
<dbReference type="InterPro" id="IPR001980">
    <property type="entry name" value="PPAT"/>
</dbReference>
<dbReference type="InterPro" id="IPR014729">
    <property type="entry name" value="Rossmann-like_a/b/a_fold"/>
</dbReference>
<dbReference type="NCBIfam" id="TIGR01510">
    <property type="entry name" value="coaD_prev_kdtB"/>
    <property type="match status" value="1"/>
</dbReference>
<dbReference type="NCBIfam" id="TIGR00125">
    <property type="entry name" value="cyt_tran_rel"/>
    <property type="match status" value="1"/>
</dbReference>
<dbReference type="PANTHER" id="PTHR21342">
    <property type="entry name" value="PHOSPHOPANTETHEINE ADENYLYLTRANSFERASE"/>
    <property type="match status" value="1"/>
</dbReference>
<dbReference type="PANTHER" id="PTHR21342:SF1">
    <property type="entry name" value="PHOSPHOPANTETHEINE ADENYLYLTRANSFERASE"/>
    <property type="match status" value="1"/>
</dbReference>
<dbReference type="Pfam" id="PF01467">
    <property type="entry name" value="CTP_transf_like"/>
    <property type="match status" value="1"/>
</dbReference>
<dbReference type="PRINTS" id="PR01020">
    <property type="entry name" value="LPSBIOSNTHSS"/>
</dbReference>
<dbReference type="SUPFAM" id="SSF52374">
    <property type="entry name" value="Nucleotidylyl transferase"/>
    <property type="match status" value="1"/>
</dbReference>
<feature type="chain" id="PRO_1000096802" description="Phosphopantetheine adenylyltransferase">
    <location>
        <begin position="1"/>
        <end position="157"/>
    </location>
</feature>
<feature type="binding site" evidence="1">
    <location>
        <begin position="10"/>
        <end position="11"/>
    </location>
    <ligand>
        <name>ATP</name>
        <dbReference type="ChEBI" id="CHEBI:30616"/>
    </ligand>
</feature>
<feature type="binding site" evidence="1">
    <location>
        <position position="10"/>
    </location>
    <ligand>
        <name>substrate</name>
    </ligand>
</feature>
<feature type="binding site" evidence="1">
    <location>
        <position position="18"/>
    </location>
    <ligand>
        <name>ATP</name>
        <dbReference type="ChEBI" id="CHEBI:30616"/>
    </ligand>
</feature>
<feature type="binding site" evidence="1">
    <location>
        <position position="42"/>
    </location>
    <ligand>
        <name>substrate</name>
    </ligand>
</feature>
<feature type="binding site" evidence="1">
    <location>
        <position position="74"/>
    </location>
    <ligand>
        <name>substrate</name>
    </ligand>
</feature>
<feature type="binding site" evidence="1">
    <location>
        <position position="88"/>
    </location>
    <ligand>
        <name>substrate</name>
    </ligand>
</feature>
<feature type="binding site" evidence="1">
    <location>
        <begin position="89"/>
        <end position="91"/>
    </location>
    <ligand>
        <name>ATP</name>
        <dbReference type="ChEBI" id="CHEBI:30616"/>
    </ligand>
</feature>
<feature type="binding site" evidence="1">
    <location>
        <position position="99"/>
    </location>
    <ligand>
        <name>ATP</name>
        <dbReference type="ChEBI" id="CHEBI:30616"/>
    </ligand>
</feature>
<feature type="binding site" evidence="1">
    <location>
        <begin position="124"/>
        <end position="130"/>
    </location>
    <ligand>
        <name>ATP</name>
        <dbReference type="ChEBI" id="CHEBI:30616"/>
    </ligand>
</feature>
<feature type="site" description="Transition state stabilizer" evidence="1">
    <location>
        <position position="18"/>
    </location>
</feature>
<comment type="function">
    <text evidence="1">Reversibly transfers an adenylyl group from ATP to 4'-phosphopantetheine, yielding dephospho-CoA (dPCoA) and pyrophosphate.</text>
</comment>
<comment type="catalytic activity">
    <reaction evidence="1">
        <text>(R)-4'-phosphopantetheine + ATP + H(+) = 3'-dephospho-CoA + diphosphate</text>
        <dbReference type="Rhea" id="RHEA:19801"/>
        <dbReference type="ChEBI" id="CHEBI:15378"/>
        <dbReference type="ChEBI" id="CHEBI:30616"/>
        <dbReference type="ChEBI" id="CHEBI:33019"/>
        <dbReference type="ChEBI" id="CHEBI:57328"/>
        <dbReference type="ChEBI" id="CHEBI:61723"/>
        <dbReference type="EC" id="2.7.7.3"/>
    </reaction>
</comment>
<comment type="cofactor">
    <cofactor evidence="1">
        <name>Mg(2+)</name>
        <dbReference type="ChEBI" id="CHEBI:18420"/>
    </cofactor>
</comment>
<comment type="pathway">
    <text evidence="1">Cofactor biosynthesis; coenzyme A biosynthesis; CoA from (R)-pantothenate: step 4/5.</text>
</comment>
<comment type="subunit">
    <text evidence="1">Homohexamer.</text>
</comment>
<comment type="subcellular location">
    <subcellularLocation>
        <location evidence="1">Cytoplasm</location>
    </subcellularLocation>
</comment>
<comment type="similarity">
    <text evidence="1">Belongs to the bacterial CoaD family.</text>
</comment>
<name>COAD_HELPS</name>
<gene>
    <name evidence="1" type="primary">coaD</name>
    <name type="ordered locus">HPSH_07555</name>
</gene>
<protein>
    <recommendedName>
        <fullName evidence="1">Phosphopantetheine adenylyltransferase</fullName>
        <ecNumber evidence="1">2.7.7.3</ecNumber>
    </recommendedName>
    <alternativeName>
        <fullName evidence="1">Dephospho-CoA pyrophosphorylase</fullName>
    </alternativeName>
    <alternativeName>
        <fullName evidence="1">Pantetheine-phosphate adenylyltransferase</fullName>
        <shortName evidence="1">PPAT</shortName>
    </alternativeName>
</protein>
<reference key="1">
    <citation type="submission" date="2008-05" db="EMBL/GenBank/DDBJ databases">
        <title>Genome sequence of Helicobacter pylori from the remote Amazon: traces of Asian ancestry of the first Americans.</title>
        <authorList>
            <person name="Kersulyte D."/>
            <person name="Kalia A."/>
            <person name="Gilman R.H."/>
            <person name="Berg D.E."/>
        </authorList>
    </citation>
    <scope>NUCLEOTIDE SEQUENCE [LARGE SCALE GENOMIC DNA]</scope>
    <source>
        <strain>Shi470</strain>
    </source>
</reference>
<keyword id="KW-0067">ATP-binding</keyword>
<keyword id="KW-0173">Coenzyme A biosynthesis</keyword>
<keyword id="KW-0963">Cytoplasm</keyword>
<keyword id="KW-0460">Magnesium</keyword>
<keyword id="KW-0547">Nucleotide-binding</keyword>
<keyword id="KW-0548">Nucleotidyltransferase</keyword>
<keyword id="KW-0808">Transferase</keyword>
<accession>B2UVM0</accession>
<evidence type="ECO:0000255" key="1">
    <source>
        <dbReference type="HAMAP-Rule" id="MF_00151"/>
    </source>
</evidence>
<sequence>MQKIGIYPGTFDPVTNGHIDIIHRSSELFEKLIVAVAYSCAKNPMFSLKERLEMIQLATKGFKNVECVAFEGLLANLAKEYHCKVLVRGLRVVSDFEYELQMGYANKSLNHELETLYFMPTLQNAFISSSIVRSIIAHKGDASHLVPKEIHPFISKV</sequence>
<proteinExistence type="inferred from homology"/>